<protein>
    <recommendedName>
        <fullName evidence="8">Aldo-keto reductase ausK</fullName>
        <ecNumber evidence="8">1.1.1.-</ecNumber>
    </recommendedName>
    <alternativeName>
        <fullName evidence="7">Austinoid biosynthesis clusters protein K</fullName>
    </alternativeName>
</protein>
<feature type="chain" id="PRO_0000436493" description="Aldo-keto reductase ausK">
    <location>
        <begin position="1"/>
        <end position="398"/>
    </location>
</feature>
<feature type="active site" description="Proton donor" evidence="2">
    <location>
        <position position="81"/>
    </location>
</feature>
<feature type="binding site" evidence="1">
    <location>
        <position position="76"/>
    </location>
    <ligand>
        <name>NADP(+)</name>
        <dbReference type="ChEBI" id="CHEBI:58349"/>
    </ligand>
</feature>
<feature type="binding site" evidence="2">
    <location>
        <position position="156"/>
    </location>
    <ligand>
        <name>substrate</name>
    </ligand>
</feature>
<feature type="binding site" evidence="1">
    <location>
        <begin position="186"/>
        <end position="187"/>
    </location>
    <ligand>
        <name>NADP(+)</name>
        <dbReference type="ChEBI" id="CHEBI:58349"/>
    </ligand>
</feature>
<feature type="binding site" evidence="1">
    <location>
        <position position="212"/>
    </location>
    <ligand>
        <name>NADP(+)</name>
        <dbReference type="ChEBI" id="CHEBI:58349"/>
    </ligand>
</feature>
<feature type="binding site" evidence="1">
    <location>
        <begin position="241"/>
        <end position="251"/>
    </location>
    <ligand>
        <name>NADP(+)</name>
        <dbReference type="ChEBI" id="CHEBI:58349"/>
    </ligand>
</feature>
<feature type="binding site" evidence="1">
    <location>
        <begin position="317"/>
        <end position="325"/>
    </location>
    <ligand>
        <name>NADP(+)</name>
        <dbReference type="ChEBI" id="CHEBI:58349"/>
    </ligand>
</feature>
<evidence type="ECO:0000250" key="1">
    <source>
        <dbReference type="UniProtKB" id="O43488"/>
    </source>
</evidence>
<evidence type="ECO:0000250" key="2">
    <source>
        <dbReference type="UniProtKB" id="Q8CG76"/>
    </source>
</evidence>
<evidence type="ECO:0000269" key="3">
    <source>
    </source>
</evidence>
<evidence type="ECO:0000269" key="4">
    <source>
    </source>
</evidence>
<evidence type="ECO:0000269" key="5">
    <source>
    </source>
</evidence>
<evidence type="ECO:0000269" key="6">
    <source>
    </source>
</evidence>
<evidence type="ECO:0000303" key="7">
    <source>
    </source>
</evidence>
<evidence type="ECO:0000305" key="8"/>
<evidence type="ECO:0000305" key="9">
    <source>
    </source>
</evidence>
<keyword id="KW-0521">NADP</keyword>
<keyword id="KW-0560">Oxidoreductase</keyword>
<keyword id="KW-1185">Reference proteome</keyword>
<accession>C8VQ93</accession>
<organism>
    <name type="scientific">Emericella nidulans (strain FGSC A4 / ATCC 38163 / CBS 112.46 / NRRL 194 / M139)</name>
    <name type="common">Aspergillus nidulans</name>
    <dbReference type="NCBI Taxonomy" id="227321"/>
    <lineage>
        <taxon>Eukaryota</taxon>
        <taxon>Fungi</taxon>
        <taxon>Dikarya</taxon>
        <taxon>Ascomycota</taxon>
        <taxon>Pezizomycotina</taxon>
        <taxon>Eurotiomycetes</taxon>
        <taxon>Eurotiomycetidae</taxon>
        <taxon>Eurotiales</taxon>
        <taxon>Aspergillaceae</taxon>
        <taxon>Aspergillus</taxon>
        <taxon>Aspergillus subgen. Nidulantes</taxon>
    </lineage>
</organism>
<comment type="function">
    <text evidence="3 4 5 6">Aldo-keto reductase; part of the gene cluster B that mediates the biosynthesis of austinol and dehydroaustinol, two fungal meroterpenoids (PubMed:22329759). The first step of the pathway is the synthesis of 3,5-dimethylorsellinic acid by the polyketide synthase ausA (PubMed:22329759). 3,5-dimethylorsellinic acid is then prenylated by the polyprenyl transferase ausN (PubMed:22329759). Further epoxidation by the FAD-dependent monooxygenase ausM and cyclization by the probable terpene cyclase ausL lead to the formation of protoaustinoid A (PubMed:22329759). Protoaustinoid A is then oxidized to spiro-lactone preaustinoid A3 by the combined action of the FAD-binding monooxygenases ausB and ausC, and the dioxygenase ausE (PubMed:22329759, PubMed:23865690). Acid-catalyzed keto-rearrangement and ring contraction of the tetraketide portion of preaustinoid A3 by ausJ lead to the formation of preaustinoid A4 (PubMed:22329759). The aldo-keto reductase ausK, with the help of ausH, is involved in the next step by transforming preaustinoid A4 into isoaustinone which is in turn hydroxylated by the P450 monooxygenase ausI to form austinolide (PubMed:22329759). Finally, the cytochrome P450 monooxygenase ausG modifies austinolide to austinol (PubMed:22329759). Austinol can be further modified to dehydroaustinol which forms a diffusible complex with diorcinol that initiates conidiation (PubMed:22234162, PubMed:22329759). Due to genetic rearrangements of the clusters and the subsequent loss of some enzymes, the end products of the Emericella nidulans austinoid biosynthesis clusters are austinol and dehydroaustinol, even if additional enzymes, such as the O-acetyltransferase ausQ and the cytochrome P450 monooxygenase ausR are still functional (PubMed:29076725).</text>
</comment>
<comment type="pathway">
    <text evidence="4">Secondary metabolite biosynthesis; terpenoid biosynthesis.</text>
</comment>
<comment type="subunit">
    <text evidence="2">Homodimer.</text>
</comment>
<comment type="disruption phenotype">
    <text evidence="4">Impairs the synthesis of austinol and dehydroaustinol and accumulates the intermediate compounds preaustinoid A4, preaustinoid A5 and austinoneol A11 (PubMed:22329759).</text>
</comment>
<comment type="miscellaneous">
    <text evidence="9">In A.calidoustus, the austinoid gene cluster lies on a contiguous DNA region, while clusters from E.nidulans and P.brasilianum are split in their respective genomes. Genetic rearrangements provoked variability among the clusters and E.nidulans produces the least number of austionoid derivatives with the end products austinol and dehydroaustinol, while P.brasilianum can produce until acetoxydehydroaustin, and A.calidoustus produces the highest number of identified derivatives.</text>
</comment>
<comment type="similarity">
    <text evidence="8">Belongs to the aldo/keto reductase family. Aldo/keto reductase 2 subfamily.</text>
</comment>
<sequence>MTGTRILELFGPAPEPPSELGRYRILSPTAGIRVSPLQLGALSIGDAWSTDLGSMDKDSAMELLDAYAAAGGNFIDTANAYQNEQSEMWIGEWMASRGNRDKMVIATKFGTDYRAHELGKGLAVNYSGNHKRSLHMSVRDSLQKLRTSWIDILYLHTWDYTTSIPELMDSLHHLVQRGDVLYLGICNTPAWVVSAANTYAQQQGKTQFSVYQGRWNPLRRELERDILPMARHFGMAVTVYDALGSGKFQSRDMLARRKDQGEGLRAIYGGQQTALEEAMSKALGVVAAQHGIESVTAVALAYLLAKAPYVFPIIGGRKIQHLHDNIEALSLRLSQEEIEYLESVGDFDPGFPYDMAGVDPADTGIATPIVAQAAPMAFVQRSKAIGYAESSKGSQMFG</sequence>
<reference key="1">
    <citation type="journal article" date="2005" name="Nature">
        <title>Sequencing of Aspergillus nidulans and comparative analysis with A. fumigatus and A. oryzae.</title>
        <authorList>
            <person name="Galagan J.E."/>
            <person name="Calvo S.E."/>
            <person name="Cuomo C."/>
            <person name="Ma L.-J."/>
            <person name="Wortman J.R."/>
            <person name="Batzoglou S."/>
            <person name="Lee S.-I."/>
            <person name="Bastuerkmen M."/>
            <person name="Spevak C.C."/>
            <person name="Clutterbuck J."/>
            <person name="Kapitonov V."/>
            <person name="Jurka J."/>
            <person name="Scazzocchio C."/>
            <person name="Farman M.L."/>
            <person name="Butler J."/>
            <person name="Purcell S."/>
            <person name="Harris S."/>
            <person name="Braus G.H."/>
            <person name="Draht O."/>
            <person name="Busch S."/>
            <person name="D'Enfert C."/>
            <person name="Bouchier C."/>
            <person name="Goldman G.H."/>
            <person name="Bell-Pedersen D."/>
            <person name="Griffiths-Jones S."/>
            <person name="Doonan J.H."/>
            <person name="Yu J."/>
            <person name="Vienken K."/>
            <person name="Pain A."/>
            <person name="Freitag M."/>
            <person name="Selker E.U."/>
            <person name="Archer D.B."/>
            <person name="Penalva M.A."/>
            <person name="Oakley B.R."/>
            <person name="Momany M."/>
            <person name="Tanaka T."/>
            <person name="Kumagai T."/>
            <person name="Asai K."/>
            <person name="Machida M."/>
            <person name="Nierman W.C."/>
            <person name="Denning D.W."/>
            <person name="Caddick M.X."/>
            <person name="Hynes M."/>
            <person name="Paoletti M."/>
            <person name="Fischer R."/>
            <person name="Miller B.L."/>
            <person name="Dyer P.S."/>
            <person name="Sachs M.S."/>
            <person name="Osmani S.A."/>
            <person name="Birren B.W."/>
        </authorList>
    </citation>
    <scope>NUCLEOTIDE SEQUENCE [LARGE SCALE GENOMIC DNA]</scope>
    <source>
        <strain>FGSC A4 / ATCC 38163 / CBS 112.46 / NRRL 194 / M139</strain>
    </source>
</reference>
<reference key="2">
    <citation type="journal article" date="2009" name="Fungal Genet. Biol.">
        <title>The 2008 update of the Aspergillus nidulans genome annotation: a community effort.</title>
        <authorList>
            <person name="Wortman J.R."/>
            <person name="Gilsenan J.M."/>
            <person name="Joardar V."/>
            <person name="Deegan J."/>
            <person name="Clutterbuck J."/>
            <person name="Andersen M.R."/>
            <person name="Archer D."/>
            <person name="Bencina M."/>
            <person name="Braus G."/>
            <person name="Coutinho P."/>
            <person name="von Dohren H."/>
            <person name="Doonan J."/>
            <person name="Driessen A.J."/>
            <person name="Durek P."/>
            <person name="Espeso E."/>
            <person name="Fekete E."/>
            <person name="Flipphi M."/>
            <person name="Estrada C.G."/>
            <person name="Geysens S."/>
            <person name="Goldman G."/>
            <person name="de Groot P.W."/>
            <person name="Hansen K."/>
            <person name="Harris S.D."/>
            <person name="Heinekamp T."/>
            <person name="Helmstaedt K."/>
            <person name="Henrissat B."/>
            <person name="Hofmann G."/>
            <person name="Homan T."/>
            <person name="Horio T."/>
            <person name="Horiuchi H."/>
            <person name="James S."/>
            <person name="Jones M."/>
            <person name="Karaffa L."/>
            <person name="Karanyi Z."/>
            <person name="Kato M."/>
            <person name="Keller N."/>
            <person name="Kelly D.E."/>
            <person name="Kiel J.A."/>
            <person name="Kim J.M."/>
            <person name="van der Klei I.J."/>
            <person name="Klis F.M."/>
            <person name="Kovalchuk A."/>
            <person name="Krasevec N."/>
            <person name="Kubicek C.P."/>
            <person name="Liu B."/>
            <person name="Maccabe A."/>
            <person name="Meyer V."/>
            <person name="Mirabito P."/>
            <person name="Miskei M."/>
            <person name="Mos M."/>
            <person name="Mullins J."/>
            <person name="Nelson D.R."/>
            <person name="Nielsen J."/>
            <person name="Oakley B.R."/>
            <person name="Osmani S.A."/>
            <person name="Pakula T."/>
            <person name="Paszewski A."/>
            <person name="Paulsen I."/>
            <person name="Pilsyk S."/>
            <person name="Pocsi I."/>
            <person name="Punt P.J."/>
            <person name="Ram A.F."/>
            <person name="Ren Q."/>
            <person name="Robellet X."/>
            <person name="Robson G."/>
            <person name="Seiboth B."/>
            <person name="van Solingen P."/>
            <person name="Specht T."/>
            <person name="Sun J."/>
            <person name="Taheri-Talesh N."/>
            <person name="Takeshita N."/>
            <person name="Ussery D."/>
            <person name="vanKuyk P.A."/>
            <person name="Visser H."/>
            <person name="van de Vondervoort P.J."/>
            <person name="de Vries R.P."/>
            <person name="Walton J."/>
            <person name="Xiang X."/>
            <person name="Xiong Y."/>
            <person name="Zeng A.P."/>
            <person name="Brandt B.W."/>
            <person name="Cornell M.J."/>
            <person name="van den Hondel C.A."/>
            <person name="Visser J."/>
            <person name="Oliver S.G."/>
            <person name="Turner G."/>
        </authorList>
    </citation>
    <scope>GENOME REANNOTATION</scope>
    <source>
        <strain>FGSC A4 / ATCC 38163 / CBS 112.46 / NRRL 194 / M139</strain>
    </source>
</reference>
<reference key="3">
    <citation type="journal article" date="2012" name="ACS Chem. Biol.">
        <title>Signaling the induction of sporulation involves the interaction of two secondary metabolites in Aspergillus nidulans.</title>
        <authorList>
            <person name="Rodriguez-Urra A.B."/>
            <person name="Jimenez C."/>
            <person name="Nieto M.I."/>
            <person name="Rodriguez J."/>
            <person name="Hayashi H."/>
            <person name="Ugalde U."/>
        </authorList>
    </citation>
    <scope>FUNCTION</scope>
</reference>
<reference key="4">
    <citation type="journal article" date="2012" name="J. Am. Chem. Soc.">
        <title>Two separate gene clusters encode the biosynthetic pathway for the meroterpenoids austinol and dehydroaustinol in Aspergillus nidulans.</title>
        <authorList>
            <person name="Lo H.C."/>
            <person name="Entwistle R."/>
            <person name="Guo C.J."/>
            <person name="Ahuja M."/>
            <person name="Szewczyk E."/>
            <person name="Hung J.H."/>
            <person name="Chiang Y.M."/>
            <person name="Oakley B.R."/>
            <person name="Wang C.C."/>
        </authorList>
    </citation>
    <scope>FUNCTION</scope>
    <scope>DISRUPTION PHENOTYPE</scope>
</reference>
<reference key="5">
    <citation type="journal article" date="2013" name="J. Am. Chem. Soc.">
        <title>Spiro-ring formation is catalyzed by a multifunctional dioxygenase in austinol biosynthesis.</title>
        <authorList>
            <person name="Matsuda Y."/>
            <person name="Awakawa T."/>
            <person name="Wakimoto T."/>
            <person name="Abe I."/>
        </authorList>
    </citation>
    <scope>FUNCTION</scope>
</reference>
<reference key="6">
    <citation type="journal article" date="2017" name="ACS Chem. Biol.">
        <title>Rewiring of the austinoid biosynthetic pathway in filamentous fungi.</title>
        <authorList>
            <person name="Mattern D.J."/>
            <person name="Valiante V."/>
            <person name="Horn F."/>
            <person name="Petzke L."/>
            <person name="Brakhage A.A."/>
        </authorList>
    </citation>
    <scope>FUNCTION</scope>
</reference>
<gene>
    <name evidence="7" type="primary">ausK</name>
    <name type="ORF">ANIA_11205</name>
</gene>
<name>AUSK_EMENI</name>
<dbReference type="EC" id="1.1.1.-" evidence="8"/>
<dbReference type="EMBL" id="BN001308">
    <property type="protein sequence ID" value="CBF87258.1"/>
    <property type="molecule type" value="Genomic_DNA"/>
</dbReference>
<dbReference type="SMR" id="C8VQ93"/>
<dbReference type="STRING" id="227321.C8VQ93"/>
<dbReference type="EnsemblFungi" id="CBF87258">
    <property type="protein sequence ID" value="CBF87258"/>
    <property type="gene ID" value="ANIA_11205"/>
</dbReference>
<dbReference type="VEuPathDB" id="FungiDB:AN11205"/>
<dbReference type="eggNOG" id="KOG1575">
    <property type="taxonomic scope" value="Eukaryota"/>
</dbReference>
<dbReference type="HOGENOM" id="CLU_023205_2_2_1"/>
<dbReference type="InParanoid" id="C8VQ93"/>
<dbReference type="OMA" id="EYRWGDA"/>
<dbReference type="OrthoDB" id="48988at2759"/>
<dbReference type="UniPathway" id="UPA00213"/>
<dbReference type="Proteomes" id="UP000000560">
    <property type="component" value="Chromosome VIII"/>
</dbReference>
<dbReference type="GO" id="GO:0016491">
    <property type="term" value="F:oxidoreductase activity"/>
    <property type="evidence" value="ECO:0007669"/>
    <property type="project" value="UniProtKB-KW"/>
</dbReference>
<dbReference type="GO" id="GO:1900560">
    <property type="term" value="P:austinol biosynthetic process"/>
    <property type="evidence" value="ECO:0000315"/>
    <property type="project" value="AspGD"/>
</dbReference>
<dbReference type="GO" id="GO:1900563">
    <property type="term" value="P:dehydroaustinol biosynthetic process"/>
    <property type="evidence" value="ECO:0000315"/>
    <property type="project" value="AspGD"/>
</dbReference>
<dbReference type="GO" id="GO:0016114">
    <property type="term" value="P:terpenoid biosynthetic process"/>
    <property type="evidence" value="ECO:0007669"/>
    <property type="project" value="UniProtKB-UniPathway"/>
</dbReference>
<dbReference type="CDD" id="cd19147">
    <property type="entry name" value="AKR_AKR9A3_9B1-4"/>
    <property type="match status" value="1"/>
</dbReference>
<dbReference type="FunFam" id="3.20.20.100:FF:000024">
    <property type="entry name" value="Aryl-alcohol dehydrogenase"/>
    <property type="match status" value="1"/>
</dbReference>
<dbReference type="Gene3D" id="3.20.20.100">
    <property type="entry name" value="NADP-dependent oxidoreductase domain"/>
    <property type="match status" value="1"/>
</dbReference>
<dbReference type="InterPro" id="IPR050523">
    <property type="entry name" value="AKR_Detox_Biosynth"/>
</dbReference>
<dbReference type="InterPro" id="IPR023210">
    <property type="entry name" value="NADP_OxRdtase_dom"/>
</dbReference>
<dbReference type="InterPro" id="IPR036812">
    <property type="entry name" value="NADP_OxRdtase_dom_sf"/>
</dbReference>
<dbReference type="PANTHER" id="PTHR43364:SF2">
    <property type="entry name" value="ARYL-ALCOHOL DEHYDROGENASE AAD10-RELATED"/>
    <property type="match status" value="1"/>
</dbReference>
<dbReference type="PANTHER" id="PTHR43364">
    <property type="entry name" value="NADH-SPECIFIC METHYLGLYOXAL REDUCTASE-RELATED"/>
    <property type="match status" value="1"/>
</dbReference>
<dbReference type="Pfam" id="PF00248">
    <property type="entry name" value="Aldo_ket_red"/>
    <property type="match status" value="1"/>
</dbReference>
<dbReference type="SUPFAM" id="SSF51430">
    <property type="entry name" value="NAD(P)-linked oxidoreductase"/>
    <property type="match status" value="1"/>
</dbReference>
<proteinExistence type="inferred from homology"/>